<accession>Q5HLY6</accession>
<proteinExistence type="inferred from homology"/>
<name>FEMX_STAEQ</name>
<reference key="1">
    <citation type="journal article" date="2005" name="J. Bacteriol.">
        <title>Insights on evolution of virulence and resistance from the complete genome analysis of an early methicillin-resistant Staphylococcus aureus strain and a biofilm-producing methicillin-resistant Staphylococcus epidermidis strain.</title>
        <authorList>
            <person name="Gill S.R."/>
            <person name="Fouts D.E."/>
            <person name="Archer G.L."/>
            <person name="Mongodin E.F."/>
            <person name="DeBoy R.T."/>
            <person name="Ravel J."/>
            <person name="Paulsen I.T."/>
            <person name="Kolonay J.F."/>
            <person name="Brinkac L.M."/>
            <person name="Beanan M.J."/>
            <person name="Dodson R.J."/>
            <person name="Daugherty S.C."/>
            <person name="Madupu R."/>
            <person name="Angiuoli S.V."/>
            <person name="Durkin A.S."/>
            <person name="Haft D.H."/>
            <person name="Vamathevan J.J."/>
            <person name="Khouri H."/>
            <person name="Utterback T.R."/>
            <person name="Lee C."/>
            <person name="Dimitrov G."/>
            <person name="Jiang L."/>
            <person name="Qin H."/>
            <person name="Weidman J."/>
            <person name="Tran K."/>
            <person name="Kang K.H."/>
            <person name="Hance I.R."/>
            <person name="Nelson K.E."/>
            <person name="Fraser C.M."/>
        </authorList>
    </citation>
    <scope>NUCLEOTIDE SEQUENCE [LARGE SCALE GENOMIC DNA]</scope>
    <source>
        <strain>ATCC 35984 / DSM 28319 / BCRC 17069 / CCUG 31568 / BM 3577 / RP62A</strain>
    </source>
</reference>
<comment type="function">
    <text evidence="1">Catalyzes the incorporation of amino acid(s) into the interchain peptide bridge of peptidoglycan, using aminoacyl-tRNA as amino acid donor.</text>
</comment>
<comment type="catalytic activity">
    <reaction>
        <text>beta-D-GlcNAc-(1-&gt;4)-Mur2Ac(oyl-L-Ala-D-isoglutaminyl-L-Lys-D-Ala-D-Ala)-di-trans,octa-cis-undecaprenyl diphosphate + glycyl-tRNA(Gly) = beta-D-GlcNAc-(1-&gt;4)-Mur2Ac(oyl-L-Ala-D-isoglutaminyl-L-Lys-(N(6)-Gly)-D-Ala-D-Ala)-di-trans,octa-cis-undecaprenyl diphosphate + tRNA(Gly) + H(+)</text>
        <dbReference type="Rhea" id="RHEA:30435"/>
        <dbReference type="Rhea" id="RHEA-COMP:9664"/>
        <dbReference type="Rhea" id="RHEA-COMP:9683"/>
        <dbReference type="ChEBI" id="CHEBI:15378"/>
        <dbReference type="ChEBI" id="CHEBI:62233"/>
        <dbReference type="ChEBI" id="CHEBI:62234"/>
        <dbReference type="ChEBI" id="CHEBI:78442"/>
        <dbReference type="ChEBI" id="CHEBI:78522"/>
        <dbReference type="EC" id="2.3.2.16"/>
    </reaction>
</comment>
<comment type="subcellular location">
    <subcellularLocation>
        <location evidence="2">Cytoplasm</location>
    </subcellularLocation>
</comment>
<comment type="similarity">
    <text evidence="2">Belongs to the FemABX family.</text>
</comment>
<evidence type="ECO:0000250" key="1"/>
<evidence type="ECO:0000305" key="2"/>
<sequence>MEKMNITNQQHDAFVKSHPNGDLLQLSKWADTKKLTGWYSRRIAVGENGQIKGVGQLLFKKIPKLPYTLCYVSRGFVADYNNKEVLEALLSYAKEVAKDEKSYAIKIDPDVEVDKGAEALKNLRELGFKHKGFKEGLSKDYIQPRMTMITPIDKTDDELVQSFERRNRSKVRLALKRGTKVERSNREGLKIFANLMKITGERDGFLTRDISYFENIYDALHEDGDAELFLVKLEPKPVLDTVNQDLEAQLAEKEKLQSKKQDKKTLNKLNDIDNKIKKTNELKSDLTELEKSEPEGIYLSGALLMFAGNKSYYLYGASSNDYRDFLPNHHMQFEMMKYAREHGATTYDFGGTDNDPDKDSEHYGLWAFKRVWGTYLSEKIGEFDYVLNQPLYHLVEKVKPRLTKAKIKISRKLKGK</sequence>
<feature type="chain" id="PRO_0000236176" description="Lipid II:glycine glycyltransferase">
    <location>
        <begin position="1"/>
        <end position="416"/>
    </location>
</feature>
<organism>
    <name type="scientific">Staphylococcus epidermidis (strain ATCC 35984 / DSM 28319 / BCRC 17069 / CCUG 31568 / BM 3577 / RP62A)</name>
    <dbReference type="NCBI Taxonomy" id="176279"/>
    <lineage>
        <taxon>Bacteria</taxon>
        <taxon>Bacillati</taxon>
        <taxon>Bacillota</taxon>
        <taxon>Bacilli</taxon>
        <taxon>Bacillales</taxon>
        <taxon>Staphylococcaceae</taxon>
        <taxon>Staphylococcus</taxon>
    </lineage>
</organism>
<dbReference type="EC" id="2.3.2.16"/>
<dbReference type="EMBL" id="CP000029">
    <property type="protein sequence ID" value="AAW55189.1"/>
    <property type="molecule type" value="Genomic_DNA"/>
</dbReference>
<dbReference type="RefSeq" id="WP_002438530.1">
    <property type="nucleotide sequence ID" value="NC_002976.3"/>
</dbReference>
<dbReference type="SMR" id="Q5HLY6"/>
<dbReference type="STRING" id="176279.SERP1844"/>
<dbReference type="KEGG" id="ser:SERP1844"/>
<dbReference type="eggNOG" id="COG2348">
    <property type="taxonomic scope" value="Bacteria"/>
</dbReference>
<dbReference type="HOGENOM" id="CLU_048411_0_1_9"/>
<dbReference type="Proteomes" id="UP000000531">
    <property type="component" value="Chromosome"/>
</dbReference>
<dbReference type="GO" id="GO:0005737">
    <property type="term" value="C:cytoplasm"/>
    <property type="evidence" value="ECO:0007669"/>
    <property type="project" value="UniProtKB-SubCell"/>
</dbReference>
<dbReference type="GO" id="GO:0016755">
    <property type="term" value="F:aminoacyltransferase activity"/>
    <property type="evidence" value="ECO:0007669"/>
    <property type="project" value="InterPro"/>
</dbReference>
<dbReference type="GO" id="GO:0071555">
    <property type="term" value="P:cell wall organization"/>
    <property type="evidence" value="ECO:0007669"/>
    <property type="project" value="UniProtKB-KW"/>
</dbReference>
<dbReference type="GO" id="GO:0009252">
    <property type="term" value="P:peptidoglycan biosynthetic process"/>
    <property type="evidence" value="ECO:0007669"/>
    <property type="project" value="UniProtKB-KW"/>
</dbReference>
<dbReference type="GO" id="GO:0008360">
    <property type="term" value="P:regulation of cell shape"/>
    <property type="evidence" value="ECO:0007669"/>
    <property type="project" value="UniProtKB-KW"/>
</dbReference>
<dbReference type="Gene3D" id="1.20.58.90">
    <property type="match status" value="1"/>
</dbReference>
<dbReference type="Gene3D" id="3.40.630.30">
    <property type="match status" value="2"/>
</dbReference>
<dbReference type="InterPro" id="IPR016181">
    <property type="entry name" value="Acyl_CoA_acyltransferase"/>
</dbReference>
<dbReference type="InterPro" id="IPR003447">
    <property type="entry name" value="FEMABX"/>
</dbReference>
<dbReference type="InterPro" id="IPR050644">
    <property type="entry name" value="PG_Glycine_Bridge_Synth"/>
</dbReference>
<dbReference type="PANTHER" id="PTHR36174">
    <property type="entry name" value="LIPID II:GLYCINE GLYCYLTRANSFERASE"/>
    <property type="match status" value="1"/>
</dbReference>
<dbReference type="PANTHER" id="PTHR36174:SF1">
    <property type="entry name" value="LIPID II:GLYCINE GLYCYLTRANSFERASE"/>
    <property type="match status" value="1"/>
</dbReference>
<dbReference type="Pfam" id="PF02388">
    <property type="entry name" value="FemAB"/>
    <property type="match status" value="1"/>
</dbReference>
<dbReference type="SUPFAM" id="SSF55729">
    <property type="entry name" value="Acyl-CoA N-acyltransferases (Nat)"/>
    <property type="match status" value="2"/>
</dbReference>
<dbReference type="PROSITE" id="PS51191">
    <property type="entry name" value="FEMABX"/>
    <property type="match status" value="1"/>
</dbReference>
<protein>
    <recommendedName>
        <fullName>Lipid II:glycine glycyltransferase</fullName>
        <ecNumber>2.3.2.16</ecNumber>
    </recommendedName>
    <alternativeName>
        <fullName>Factor essential for expression of methicillin resistance X</fullName>
    </alternativeName>
</protein>
<keyword id="KW-0012">Acyltransferase</keyword>
<keyword id="KW-0133">Cell shape</keyword>
<keyword id="KW-0961">Cell wall biogenesis/degradation</keyword>
<keyword id="KW-0963">Cytoplasm</keyword>
<keyword id="KW-0573">Peptidoglycan synthesis</keyword>
<keyword id="KW-1185">Reference proteome</keyword>
<keyword id="KW-0808">Transferase</keyword>
<gene>
    <name type="primary">femX</name>
    <name type="synonym">fmhB</name>
    <name type="ordered locus">SERP1844</name>
</gene>